<protein>
    <recommendedName>
        <fullName>Bifunctional enzyme MurC/Ddl</fullName>
    </recommendedName>
    <domain>
        <recommendedName>
            <fullName>UDP-N-acetylmuramate--L-alanine ligase</fullName>
            <ecNumber>6.3.2.8</ecNumber>
        </recommendedName>
        <alternativeName>
            <fullName>UDP-N-acetylmuramoyl-L-alanine synthetase</fullName>
        </alternativeName>
    </domain>
    <domain>
        <recommendedName>
            <fullName>D-alanine--D-alanine ligase</fullName>
            <ecNumber>6.3.2.4</ecNumber>
        </recommendedName>
        <alternativeName>
            <fullName>D-Ala-D-Ala ligase</fullName>
        </alternativeName>
        <alternativeName>
            <fullName>D-alanylalanine synthetase</fullName>
        </alternativeName>
    </domain>
</protein>
<reference key="1">
    <citation type="journal article" date="1998" name="Science">
        <title>Genome sequence of an obligate intracellular pathogen of humans: Chlamydia trachomatis.</title>
        <authorList>
            <person name="Stephens R.S."/>
            <person name="Kalman S."/>
            <person name="Lammel C.J."/>
            <person name="Fan J."/>
            <person name="Marathe R."/>
            <person name="Aravind L."/>
            <person name="Mitchell W.P."/>
            <person name="Olinger L."/>
            <person name="Tatusov R.L."/>
            <person name="Zhao Q."/>
            <person name="Koonin E.V."/>
            <person name="Davis R.W."/>
        </authorList>
    </citation>
    <scope>NUCLEOTIDE SEQUENCE [LARGE SCALE GENOMIC DNA]</scope>
    <source>
        <strain>ATCC VR-885 / DSM 19411 / UW-3/Cx</strain>
    </source>
</reference>
<feature type="chain" id="PRO_0000177916" description="Bifunctional enzyme MurC/Ddl">
    <location>
        <begin position="1"/>
        <end position="803"/>
    </location>
</feature>
<feature type="domain" description="ATP-grasp">
    <location>
        <begin position="567"/>
        <end position="778"/>
    </location>
</feature>
<feature type="region of interest" description="UDP-N-acetylmuramate--alanine ligase">
    <location>
        <begin position="1"/>
        <end position="446"/>
    </location>
</feature>
<feature type="region of interest" description="D-alanine--D-alanine ligase">
    <location>
        <begin position="447"/>
        <end position="803"/>
    </location>
</feature>
<feature type="binding site" evidence="2">
    <location>
        <begin position="111"/>
        <end position="117"/>
    </location>
    <ligand>
        <name>ATP</name>
        <dbReference type="ChEBI" id="CHEBI:30616"/>
    </ligand>
</feature>
<feature type="binding site" evidence="1">
    <location>
        <begin position="600"/>
        <end position="655"/>
    </location>
    <ligand>
        <name>ATP</name>
        <dbReference type="ChEBI" id="CHEBI:30616"/>
    </ligand>
</feature>
<feature type="binding site" evidence="1">
    <location>
        <position position="732"/>
    </location>
    <ligand>
        <name>Mg(2+)</name>
        <dbReference type="ChEBI" id="CHEBI:18420"/>
        <label>1</label>
    </ligand>
</feature>
<feature type="binding site" evidence="1">
    <location>
        <position position="745"/>
    </location>
    <ligand>
        <name>Mg(2+)</name>
        <dbReference type="ChEBI" id="CHEBI:18420"/>
        <label>1</label>
    </ligand>
</feature>
<feature type="binding site" evidence="1">
    <location>
        <position position="745"/>
    </location>
    <ligand>
        <name>Mg(2+)</name>
        <dbReference type="ChEBI" id="CHEBI:18420"/>
        <label>2</label>
    </ligand>
</feature>
<feature type="binding site" evidence="1">
    <location>
        <position position="747"/>
    </location>
    <ligand>
        <name>Mg(2+)</name>
        <dbReference type="ChEBI" id="CHEBI:18420"/>
        <label>2</label>
    </ligand>
</feature>
<dbReference type="EC" id="6.3.2.8"/>
<dbReference type="EC" id="6.3.2.4"/>
<dbReference type="EMBL" id="AE001273">
    <property type="protein sequence ID" value="AAC68357.1"/>
    <property type="molecule type" value="Genomic_DNA"/>
</dbReference>
<dbReference type="PIR" id="A71475">
    <property type="entry name" value="A71475"/>
</dbReference>
<dbReference type="RefSeq" id="WP_010725335.1">
    <property type="nucleotide sequence ID" value="NC_000117.1"/>
</dbReference>
<dbReference type="SMR" id="O84767"/>
<dbReference type="FunCoup" id="O84767">
    <property type="interactions" value="163"/>
</dbReference>
<dbReference type="STRING" id="272561.CT_762"/>
<dbReference type="EnsemblBacteria" id="AAC68357">
    <property type="protein sequence ID" value="AAC68357"/>
    <property type="gene ID" value="CT_762"/>
</dbReference>
<dbReference type="KEGG" id="ctr:CT_762"/>
<dbReference type="PATRIC" id="fig|272561.5.peg.837"/>
<dbReference type="HOGENOM" id="CLU_019395_0_0_0"/>
<dbReference type="InParanoid" id="O84767"/>
<dbReference type="OrthoDB" id="9804126at2"/>
<dbReference type="UniPathway" id="UPA00219"/>
<dbReference type="Proteomes" id="UP000000431">
    <property type="component" value="Chromosome"/>
</dbReference>
<dbReference type="GO" id="GO:0005737">
    <property type="term" value="C:cytoplasm"/>
    <property type="evidence" value="ECO:0007669"/>
    <property type="project" value="UniProtKB-SubCell"/>
</dbReference>
<dbReference type="GO" id="GO:0005524">
    <property type="term" value="F:ATP binding"/>
    <property type="evidence" value="ECO:0007669"/>
    <property type="project" value="UniProtKB-UniRule"/>
</dbReference>
<dbReference type="GO" id="GO:0008716">
    <property type="term" value="F:D-alanine-D-alanine ligase activity"/>
    <property type="evidence" value="ECO:0007669"/>
    <property type="project" value="UniProtKB-UniRule"/>
</dbReference>
<dbReference type="GO" id="GO:0046872">
    <property type="term" value="F:metal ion binding"/>
    <property type="evidence" value="ECO:0007669"/>
    <property type="project" value="UniProtKB-KW"/>
</dbReference>
<dbReference type="GO" id="GO:0008763">
    <property type="term" value="F:UDP-N-acetylmuramate-L-alanine ligase activity"/>
    <property type="evidence" value="ECO:0007669"/>
    <property type="project" value="UniProtKB-UniRule"/>
</dbReference>
<dbReference type="GO" id="GO:0051301">
    <property type="term" value="P:cell division"/>
    <property type="evidence" value="ECO:0007669"/>
    <property type="project" value="UniProtKB-KW"/>
</dbReference>
<dbReference type="GO" id="GO:0071555">
    <property type="term" value="P:cell wall organization"/>
    <property type="evidence" value="ECO:0007669"/>
    <property type="project" value="UniProtKB-KW"/>
</dbReference>
<dbReference type="GO" id="GO:0009252">
    <property type="term" value="P:peptidoglycan biosynthetic process"/>
    <property type="evidence" value="ECO:0007669"/>
    <property type="project" value="UniProtKB-UniRule"/>
</dbReference>
<dbReference type="GO" id="GO:0008360">
    <property type="term" value="P:regulation of cell shape"/>
    <property type="evidence" value="ECO:0007669"/>
    <property type="project" value="UniProtKB-KW"/>
</dbReference>
<dbReference type="Gene3D" id="3.40.50.20">
    <property type="match status" value="1"/>
</dbReference>
<dbReference type="Gene3D" id="3.30.1490.20">
    <property type="entry name" value="ATP-grasp fold, A domain"/>
    <property type="match status" value="1"/>
</dbReference>
<dbReference type="Gene3D" id="3.30.470.20">
    <property type="entry name" value="ATP-grasp fold, B domain"/>
    <property type="match status" value="1"/>
</dbReference>
<dbReference type="Gene3D" id="3.90.190.20">
    <property type="entry name" value="Mur ligase, C-terminal domain"/>
    <property type="match status" value="1"/>
</dbReference>
<dbReference type="Gene3D" id="3.40.1190.10">
    <property type="entry name" value="Mur-like, catalytic domain"/>
    <property type="match status" value="1"/>
</dbReference>
<dbReference type="Gene3D" id="3.40.50.720">
    <property type="entry name" value="NAD(P)-binding Rossmann-like Domain"/>
    <property type="match status" value="1"/>
</dbReference>
<dbReference type="HAMAP" id="MF_00047">
    <property type="entry name" value="Dala_Dala_lig"/>
    <property type="match status" value="1"/>
</dbReference>
<dbReference type="HAMAP" id="MF_00046">
    <property type="entry name" value="MurC"/>
    <property type="match status" value="1"/>
</dbReference>
<dbReference type="InterPro" id="IPR011761">
    <property type="entry name" value="ATP-grasp"/>
</dbReference>
<dbReference type="InterPro" id="IPR013815">
    <property type="entry name" value="ATP_grasp_subdomain_1"/>
</dbReference>
<dbReference type="InterPro" id="IPR000291">
    <property type="entry name" value="D-Ala_lig_Van_CS"/>
</dbReference>
<dbReference type="InterPro" id="IPR005905">
    <property type="entry name" value="D_ala_D_ala"/>
</dbReference>
<dbReference type="InterPro" id="IPR011095">
    <property type="entry name" value="Dala_Dala_lig_C"/>
</dbReference>
<dbReference type="InterPro" id="IPR011127">
    <property type="entry name" value="Dala_Dala_lig_N"/>
</dbReference>
<dbReference type="InterPro" id="IPR036565">
    <property type="entry name" value="Mur-like_cat_sf"/>
</dbReference>
<dbReference type="InterPro" id="IPR004101">
    <property type="entry name" value="Mur_ligase_C"/>
</dbReference>
<dbReference type="InterPro" id="IPR036615">
    <property type="entry name" value="Mur_ligase_C_dom_sf"/>
</dbReference>
<dbReference type="InterPro" id="IPR013221">
    <property type="entry name" value="Mur_ligase_cen"/>
</dbReference>
<dbReference type="InterPro" id="IPR000713">
    <property type="entry name" value="Mur_ligase_N"/>
</dbReference>
<dbReference type="InterPro" id="IPR050061">
    <property type="entry name" value="MurCDEF_pg_biosynth"/>
</dbReference>
<dbReference type="InterPro" id="IPR016185">
    <property type="entry name" value="PreATP-grasp_dom_sf"/>
</dbReference>
<dbReference type="InterPro" id="IPR005758">
    <property type="entry name" value="UDP-N-AcMur_Ala_ligase_MurC"/>
</dbReference>
<dbReference type="NCBIfam" id="TIGR01205">
    <property type="entry name" value="D_ala_D_alaTIGR"/>
    <property type="match status" value="1"/>
</dbReference>
<dbReference type="NCBIfam" id="TIGR01082">
    <property type="entry name" value="murC"/>
    <property type="match status" value="1"/>
</dbReference>
<dbReference type="NCBIfam" id="NF002528">
    <property type="entry name" value="PRK01966.1-4"/>
    <property type="match status" value="1"/>
</dbReference>
<dbReference type="NCBIfam" id="NF011171">
    <property type="entry name" value="PRK14573.1"/>
    <property type="match status" value="1"/>
</dbReference>
<dbReference type="PANTHER" id="PTHR43445:SF3">
    <property type="entry name" value="UDP-N-ACETYLMURAMATE--L-ALANINE LIGASE"/>
    <property type="match status" value="1"/>
</dbReference>
<dbReference type="PANTHER" id="PTHR43445">
    <property type="entry name" value="UDP-N-ACETYLMURAMATE--L-ALANINE LIGASE-RELATED"/>
    <property type="match status" value="1"/>
</dbReference>
<dbReference type="Pfam" id="PF07478">
    <property type="entry name" value="Dala_Dala_lig_C"/>
    <property type="match status" value="1"/>
</dbReference>
<dbReference type="Pfam" id="PF01820">
    <property type="entry name" value="Dala_Dala_lig_N"/>
    <property type="match status" value="1"/>
</dbReference>
<dbReference type="Pfam" id="PF01225">
    <property type="entry name" value="Mur_ligase"/>
    <property type="match status" value="1"/>
</dbReference>
<dbReference type="Pfam" id="PF02875">
    <property type="entry name" value="Mur_ligase_C"/>
    <property type="match status" value="1"/>
</dbReference>
<dbReference type="Pfam" id="PF08245">
    <property type="entry name" value="Mur_ligase_M"/>
    <property type="match status" value="1"/>
</dbReference>
<dbReference type="SUPFAM" id="SSF56059">
    <property type="entry name" value="Glutathione synthetase ATP-binding domain-like"/>
    <property type="match status" value="1"/>
</dbReference>
<dbReference type="SUPFAM" id="SSF51984">
    <property type="entry name" value="MurCD N-terminal domain"/>
    <property type="match status" value="1"/>
</dbReference>
<dbReference type="SUPFAM" id="SSF53623">
    <property type="entry name" value="MurD-like peptide ligases, catalytic domain"/>
    <property type="match status" value="1"/>
</dbReference>
<dbReference type="SUPFAM" id="SSF53244">
    <property type="entry name" value="MurD-like peptide ligases, peptide-binding domain"/>
    <property type="match status" value="1"/>
</dbReference>
<dbReference type="SUPFAM" id="SSF52440">
    <property type="entry name" value="PreATP-grasp domain"/>
    <property type="match status" value="1"/>
</dbReference>
<dbReference type="PROSITE" id="PS50975">
    <property type="entry name" value="ATP_GRASP"/>
    <property type="match status" value="1"/>
</dbReference>
<dbReference type="PROSITE" id="PS00843">
    <property type="entry name" value="DALA_DALA_LIGASE_1"/>
    <property type="match status" value="1"/>
</dbReference>
<dbReference type="PROSITE" id="PS00844">
    <property type="entry name" value="DALA_DALA_LIGASE_2"/>
    <property type="match status" value="1"/>
</dbReference>
<evidence type="ECO:0000250" key="1"/>
<evidence type="ECO:0000255" key="2"/>
<evidence type="ECO:0000305" key="3"/>
<proteinExistence type="inferred from homology"/>
<sequence>MMKSLFYHFIGIGGIGMSALAHVLLDRGYSVSGSDLSEGKVVEKLKNKGAEFFLGNQEEHIPEGAVVVYSSSISKKNPEFLSAKSRGNRVVHRAELLAELAQDQISIFVTGSHGKTTVSSLITAILQEAKKNPSFAIGGLNQEGINGGSGSEYFVAEADESDGSIRCYTPEFSVITNIDDEHLSNFEGDRELLLASLKDFALKTQQICWYNGDCPRLRSCLQGHTFGLDSSCDLHILSYYQEGWRLYFTAKYQDVVYADIEVQLVGMHNVLNAAAAMGIALSLGIDEGAIRNAFRGFSGVQRRLQRKNSSETFLFLEDYAHHPSEISCTLRAVRTAVGQRRILAIYQPHRFSRLRECIDSFPSAFKDADEVLLTEVYSAGEEAEDISYQKLAEAISQESIVKCTHIPFHELQRHLEQSIRVHDVCVSLGAGNIVNLGEKLRDFEPQKLHLGIICGGKSCEHEISVLSAKNIAKHLSKSFYDVSYFLITREGLWESVSSLETAEDSGKSVFDPEIAQRLEKVDVVLPILHGPYGEDGAMQGFLETIGKPYTGPAIAFSAIAMNKVFTKRFMSDLGIPVVPYLPLTLAGWKQEQDKWLAHIVEAFSFPIFVKSSHLGSSIGVFEVHNVIELRDAINEAFMRDNDVFVEENRLGCKEIEVSVLGDGSGAFVVAGLHERRGSGGFIDYQEKYGLSGKSSAQIVFDTDLSKEIQEQILEAADKIYRLLLGKGSCRIDFFVDEEGNFWLSEMNPIPGMTETSPFLTSFIRKGWSYEQIVHQLVIDGLQRFNQRQRLISTSFVDQAFAIQ</sequence>
<gene>
    <name type="primary">murC/ddl</name>
    <name type="ordered locus">CT_762</name>
</gene>
<name>MUDD_CHLTR</name>
<accession>O84767</accession>
<keyword id="KW-0067">ATP-binding</keyword>
<keyword id="KW-0131">Cell cycle</keyword>
<keyword id="KW-0132">Cell division</keyword>
<keyword id="KW-0133">Cell shape</keyword>
<keyword id="KW-0961">Cell wall biogenesis/degradation</keyword>
<keyword id="KW-0963">Cytoplasm</keyword>
<keyword id="KW-0436">Ligase</keyword>
<keyword id="KW-0460">Magnesium</keyword>
<keyword id="KW-0464">Manganese</keyword>
<keyword id="KW-0479">Metal-binding</keyword>
<keyword id="KW-0511">Multifunctional enzyme</keyword>
<keyword id="KW-0547">Nucleotide-binding</keyword>
<keyword id="KW-0573">Peptidoglycan synthesis</keyword>
<keyword id="KW-1185">Reference proteome</keyword>
<organism>
    <name type="scientific">Chlamydia trachomatis serovar D (strain ATCC VR-885 / DSM 19411 / UW-3/Cx)</name>
    <dbReference type="NCBI Taxonomy" id="272561"/>
    <lineage>
        <taxon>Bacteria</taxon>
        <taxon>Pseudomonadati</taxon>
        <taxon>Chlamydiota</taxon>
        <taxon>Chlamydiia</taxon>
        <taxon>Chlamydiales</taxon>
        <taxon>Chlamydiaceae</taxon>
        <taxon>Chlamydia/Chlamydophila group</taxon>
        <taxon>Chlamydia</taxon>
    </lineage>
</organism>
<comment type="function">
    <text evidence="1">Cell wall formation.</text>
</comment>
<comment type="catalytic activity">
    <reaction>
        <text>UDP-N-acetyl-alpha-D-muramate + L-alanine + ATP = UDP-N-acetyl-alpha-D-muramoyl-L-alanine + ADP + phosphate + H(+)</text>
        <dbReference type="Rhea" id="RHEA:23372"/>
        <dbReference type="ChEBI" id="CHEBI:15378"/>
        <dbReference type="ChEBI" id="CHEBI:30616"/>
        <dbReference type="ChEBI" id="CHEBI:43474"/>
        <dbReference type="ChEBI" id="CHEBI:57972"/>
        <dbReference type="ChEBI" id="CHEBI:70757"/>
        <dbReference type="ChEBI" id="CHEBI:83898"/>
        <dbReference type="ChEBI" id="CHEBI:456216"/>
        <dbReference type="EC" id="6.3.2.8"/>
    </reaction>
</comment>
<comment type="catalytic activity">
    <reaction>
        <text>2 D-alanine + ATP = D-alanyl-D-alanine + ADP + phosphate + H(+)</text>
        <dbReference type="Rhea" id="RHEA:11224"/>
        <dbReference type="ChEBI" id="CHEBI:15378"/>
        <dbReference type="ChEBI" id="CHEBI:30616"/>
        <dbReference type="ChEBI" id="CHEBI:43474"/>
        <dbReference type="ChEBI" id="CHEBI:57416"/>
        <dbReference type="ChEBI" id="CHEBI:57822"/>
        <dbReference type="ChEBI" id="CHEBI:456216"/>
        <dbReference type="EC" id="6.3.2.4"/>
    </reaction>
</comment>
<comment type="cofactor">
    <cofactor evidence="1">
        <name>Mg(2+)</name>
        <dbReference type="ChEBI" id="CHEBI:18420"/>
    </cofactor>
    <cofactor evidence="1">
        <name>Mn(2+)</name>
        <dbReference type="ChEBI" id="CHEBI:29035"/>
    </cofactor>
    <text evidence="1">Binds 2 magnesium or manganese ions per subunit.</text>
</comment>
<comment type="pathway">
    <text>Cell wall biogenesis; peptidoglycan biosynthesis.</text>
</comment>
<comment type="subcellular location">
    <subcellularLocation>
        <location evidence="1">Cytoplasm</location>
    </subcellularLocation>
</comment>
<comment type="similarity">
    <text evidence="3">In the N-terminal section; belongs to the MurCDEF family.</text>
</comment>
<comment type="similarity">
    <text evidence="3">In the C-terminal section; belongs to the D-alanine--D-alanine ligase family.</text>
</comment>